<name>NKX22_HUMAN</name>
<proteinExistence type="evidence at protein level"/>
<evidence type="ECO:0000250" key="1"/>
<evidence type="ECO:0000250" key="2">
    <source>
        <dbReference type="UniProtKB" id="P42586"/>
    </source>
</evidence>
<evidence type="ECO:0000255" key="3">
    <source>
        <dbReference type="PROSITE-ProRule" id="PRU00108"/>
    </source>
</evidence>
<evidence type="ECO:0000256" key="4">
    <source>
        <dbReference type="SAM" id="MobiDB-lite"/>
    </source>
</evidence>
<evidence type="ECO:0000305" key="5"/>
<accession>O95096</accession>
<dbReference type="EMBL" id="AF019415">
    <property type="protein sequence ID" value="AAC83132.1"/>
    <property type="molecule type" value="Genomic_DNA"/>
</dbReference>
<dbReference type="EMBL" id="AF019414">
    <property type="protein sequence ID" value="AAC83132.1"/>
    <property type="status" value="JOINED"/>
    <property type="molecule type" value="Genomic_DNA"/>
</dbReference>
<dbReference type="EMBL" id="AL133325">
    <property type="status" value="NOT_ANNOTATED_CDS"/>
    <property type="molecule type" value="Genomic_DNA"/>
</dbReference>
<dbReference type="EMBL" id="BC075092">
    <property type="protein sequence ID" value="AAH75092.1"/>
    <property type="molecule type" value="mRNA"/>
</dbReference>
<dbReference type="EMBL" id="BC075093">
    <property type="protein sequence ID" value="AAH75093.1"/>
    <property type="molecule type" value="mRNA"/>
</dbReference>
<dbReference type="CCDS" id="CCDS13145.1"/>
<dbReference type="RefSeq" id="NP_001411341.1">
    <property type="nucleotide sequence ID" value="NM_001424412.1"/>
</dbReference>
<dbReference type="RefSeq" id="NP_002500.1">
    <property type="nucleotide sequence ID" value="NM_002509.4"/>
</dbReference>
<dbReference type="RefSeq" id="XP_047296108.1">
    <property type="nucleotide sequence ID" value="XM_047440152.1"/>
</dbReference>
<dbReference type="RefSeq" id="XP_054179432.1">
    <property type="nucleotide sequence ID" value="XM_054323457.1"/>
</dbReference>
<dbReference type="SMR" id="O95096"/>
<dbReference type="BioGRID" id="110886">
    <property type="interactions" value="5"/>
</dbReference>
<dbReference type="FunCoup" id="O95096">
    <property type="interactions" value="1590"/>
</dbReference>
<dbReference type="IntAct" id="O95096">
    <property type="interactions" value="1"/>
</dbReference>
<dbReference type="MINT" id="O95096"/>
<dbReference type="STRING" id="9606.ENSP00000366347"/>
<dbReference type="iPTMnet" id="O95096"/>
<dbReference type="PhosphoSitePlus" id="O95096"/>
<dbReference type="BioMuta" id="NKX2-2"/>
<dbReference type="jPOST" id="O95096"/>
<dbReference type="MassIVE" id="O95096"/>
<dbReference type="PaxDb" id="9606-ENSP00000366347"/>
<dbReference type="PeptideAtlas" id="O95096"/>
<dbReference type="Antibodypedia" id="908">
    <property type="antibodies" value="918 antibodies from 36 providers"/>
</dbReference>
<dbReference type="DNASU" id="4821"/>
<dbReference type="Ensembl" id="ENST00000377142.5">
    <property type="protein sequence ID" value="ENSP00000366347.4"/>
    <property type="gene ID" value="ENSG00000125820.6"/>
</dbReference>
<dbReference type="GeneID" id="4821"/>
<dbReference type="KEGG" id="hsa:4821"/>
<dbReference type="MANE-Select" id="ENST00000377142.5">
    <property type="protein sequence ID" value="ENSP00000366347.4"/>
    <property type="RefSeq nucleotide sequence ID" value="NM_002509.4"/>
    <property type="RefSeq protein sequence ID" value="NP_002500.1"/>
</dbReference>
<dbReference type="UCSC" id="uc002wsi.4">
    <property type="organism name" value="human"/>
</dbReference>
<dbReference type="AGR" id="HGNC:7835"/>
<dbReference type="CTD" id="4821"/>
<dbReference type="DisGeNET" id="4821"/>
<dbReference type="GeneCards" id="NKX2-2"/>
<dbReference type="GeneReviews" id="NKX2-2"/>
<dbReference type="HGNC" id="HGNC:7835">
    <property type="gene designation" value="NKX2-2"/>
</dbReference>
<dbReference type="HPA" id="ENSG00000125820">
    <property type="expression patterns" value="Tissue enriched (brain)"/>
</dbReference>
<dbReference type="MalaCards" id="NKX2-2"/>
<dbReference type="MIM" id="604612">
    <property type="type" value="gene"/>
</dbReference>
<dbReference type="neXtProt" id="NX_O95096"/>
<dbReference type="OpenTargets" id="ENSG00000125820"/>
<dbReference type="PharmGKB" id="PA31642"/>
<dbReference type="VEuPathDB" id="HostDB:ENSG00000125820"/>
<dbReference type="eggNOG" id="KOG0842">
    <property type="taxonomic scope" value="Eukaryota"/>
</dbReference>
<dbReference type="GeneTree" id="ENSGT00940000159727"/>
<dbReference type="HOGENOM" id="CLU_049543_0_2_1"/>
<dbReference type="InParanoid" id="O95096"/>
<dbReference type="OMA" id="QYPSAHH"/>
<dbReference type="OrthoDB" id="6159439at2759"/>
<dbReference type="PAN-GO" id="O95096">
    <property type="GO annotations" value="5 GO annotations based on evolutionary models"/>
</dbReference>
<dbReference type="PhylomeDB" id="O95096"/>
<dbReference type="TreeFam" id="TF351204"/>
<dbReference type="PathwayCommons" id="O95096"/>
<dbReference type="Reactome" id="R-HSA-210745">
    <property type="pathway name" value="Regulation of gene expression in beta cells"/>
</dbReference>
<dbReference type="Reactome" id="R-HSA-210746">
    <property type="pathway name" value="Regulation of gene expression in endocrine-committed (NEUROG3+) progenitor cells"/>
</dbReference>
<dbReference type="SignaLink" id="O95096"/>
<dbReference type="SIGNOR" id="O95096"/>
<dbReference type="BioGRID-ORCS" id="4821">
    <property type="hits" value="12 hits in 1143 CRISPR screens"/>
</dbReference>
<dbReference type="ChiTaRS" id="NKX2-2">
    <property type="organism name" value="human"/>
</dbReference>
<dbReference type="GeneWiki" id="NKX2-2"/>
<dbReference type="GenomeRNAi" id="4821"/>
<dbReference type="Pharos" id="O95096">
    <property type="development level" value="Tbio"/>
</dbReference>
<dbReference type="PRO" id="PR:O95096"/>
<dbReference type="Proteomes" id="UP000005640">
    <property type="component" value="Chromosome 20"/>
</dbReference>
<dbReference type="RNAct" id="O95096">
    <property type="molecule type" value="protein"/>
</dbReference>
<dbReference type="Bgee" id="ENSG00000125820">
    <property type="expression patterns" value="Expressed in inferior vagus X ganglion and 68 other cell types or tissues"/>
</dbReference>
<dbReference type="GO" id="GO:0000785">
    <property type="term" value="C:chromatin"/>
    <property type="evidence" value="ECO:0000247"/>
    <property type="project" value="NTNU_SB"/>
</dbReference>
<dbReference type="GO" id="GO:0005654">
    <property type="term" value="C:nucleoplasm"/>
    <property type="evidence" value="ECO:0000304"/>
    <property type="project" value="Reactome"/>
</dbReference>
<dbReference type="GO" id="GO:0005634">
    <property type="term" value="C:nucleus"/>
    <property type="evidence" value="ECO:0000318"/>
    <property type="project" value="GO_Central"/>
</dbReference>
<dbReference type="GO" id="GO:0000987">
    <property type="term" value="F:cis-regulatory region sequence-specific DNA binding"/>
    <property type="evidence" value="ECO:0000250"/>
    <property type="project" value="UniProtKB"/>
</dbReference>
<dbReference type="GO" id="GO:0001228">
    <property type="term" value="F:DNA-binding transcription activator activity, RNA polymerase II-specific"/>
    <property type="evidence" value="ECO:0000250"/>
    <property type="project" value="UniProtKB"/>
</dbReference>
<dbReference type="GO" id="GO:0000981">
    <property type="term" value="F:DNA-binding transcription factor activity, RNA polymerase II-specific"/>
    <property type="evidence" value="ECO:0000247"/>
    <property type="project" value="NTNU_SB"/>
</dbReference>
<dbReference type="GO" id="GO:0000978">
    <property type="term" value="F:RNA polymerase II cis-regulatory region sequence-specific DNA binding"/>
    <property type="evidence" value="ECO:0000318"/>
    <property type="project" value="GO_Central"/>
</dbReference>
<dbReference type="GO" id="GO:0048708">
    <property type="term" value="P:astrocyte differentiation"/>
    <property type="evidence" value="ECO:0007669"/>
    <property type="project" value="Ensembl"/>
</dbReference>
<dbReference type="GO" id="GO:0007420">
    <property type="term" value="P:brain development"/>
    <property type="evidence" value="ECO:0000304"/>
    <property type="project" value="ProtInc"/>
</dbReference>
<dbReference type="GO" id="GO:0030154">
    <property type="term" value="P:cell differentiation"/>
    <property type="evidence" value="ECO:0000318"/>
    <property type="project" value="GO_Central"/>
</dbReference>
<dbReference type="GO" id="GO:0048565">
    <property type="term" value="P:digestive tract development"/>
    <property type="evidence" value="ECO:0007669"/>
    <property type="project" value="Ensembl"/>
</dbReference>
<dbReference type="GO" id="GO:0045665">
    <property type="term" value="P:negative regulation of neuron differentiation"/>
    <property type="evidence" value="ECO:0007669"/>
    <property type="project" value="Ensembl"/>
</dbReference>
<dbReference type="GO" id="GO:0061101">
    <property type="term" value="P:neuroendocrine cell differentiation"/>
    <property type="evidence" value="ECO:0007669"/>
    <property type="project" value="Ensembl"/>
</dbReference>
<dbReference type="GO" id="GO:0048665">
    <property type="term" value="P:neuron fate specification"/>
    <property type="evidence" value="ECO:0007669"/>
    <property type="project" value="Ensembl"/>
</dbReference>
<dbReference type="GO" id="GO:0014003">
    <property type="term" value="P:oligodendrocyte development"/>
    <property type="evidence" value="ECO:0007669"/>
    <property type="project" value="Ensembl"/>
</dbReference>
<dbReference type="GO" id="GO:0021554">
    <property type="term" value="P:optic nerve development"/>
    <property type="evidence" value="ECO:0007669"/>
    <property type="project" value="Ensembl"/>
</dbReference>
<dbReference type="GO" id="GO:0003326">
    <property type="term" value="P:pancreatic A cell fate commitment"/>
    <property type="evidence" value="ECO:0007669"/>
    <property type="project" value="Ensembl"/>
</dbReference>
<dbReference type="GO" id="GO:0003329">
    <property type="term" value="P:pancreatic PP cell fate commitment"/>
    <property type="evidence" value="ECO:0007669"/>
    <property type="project" value="Ensembl"/>
</dbReference>
<dbReference type="GO" id="GO:0030858">
    <property type="term" value="P:positive regulation of epithelial cell differentiation"/>
    <property type="evidence" value="ECO:0007669"/>
    <property type="project" value="Ensembl"/>
</dbReference>
<dbReference type="GO" id="GO:0010628">
    <property type="term" value="P:positive regulation of gene expression"/>
    <property type="evidence" value="ECO:0007669"/>
    <property type="project" value="Ensembl"/>
</dbReference>
<dbReference type="GO" id="GO:0045666">
    <property type="term" value="P:positive regulation of neuron differentiation"/>
    <property type="evidence" value="ECO:0007669"/>
    <property type="project" value="Ensembl"/>
</dbReference>
<dbReference type="GO" id="GO:0048714">
    <property type="term" value="P:positive regulation of oligodendrocyte differentiation"/>
    <property type="evidence" value="ECO:0007669"/>
    <property type="project" value="Ensembl"/>
</dbReference>
<dbReference type="GO" id="GO:0006357">
    <property type="term" value="P:regulation of transcription by RNA polymerase II"/>
    <property type="evidence" value="ECO:0000318"/>
    <property type="project" value="GO_Central"/>
</dbReference>
<dbReference type="GO" id="GO:0009749">
    <property type="term" value="P:response to glucose"/>
    <property type="evidence" value="ECO:0007669"/>
    <property type="project" value="Ensembl"/>
</dbReference>
<dbReference type="GO" id="GO:0032570">
    <property type="term" value="P:response to progesterone"/>
    <property type="evidence" value="ECO:0007669"/>
    <property type="project" value="Ensembl"/>
</dbReference>
<dbReference type="GO" id="GO:0007224">
    <property type="term" value="P:smoothened signaling pathway"/>
    <property type="evidence" value="ECO:0007669"/>
    <property type="project" value="Ensembl"/>
</dbReference>
<dbReference type="GO" id="GO:0021522">
    <property type="term" value="P:spinal cord motor neuron differentiation"/>
    <property type="evidence" value="ECO:0007669"/>
    <property type="project" value="Ensembl"/>
</dbReference>
<dbReference type="GO" id="GO:0021530">
    <property type="term" value="P:spinal cord oligodendrocyte cell fate specification"/>
    <property type="evidence" value="ECO:0007669"/>
    <property type="project" value="Ensembl"/>
</dbReference>
<dbReference type="GO" id="GO:0003323">
    <property type="term" value="P:type B pancreatic cell development"/>
    <property type="evidence" value="ECO:0007669"/>
    <property type="project" value="Ensembl"/>
</dbReference>
<dbReference type="GO" id="GO:0003327">
    <property type="term" value="P:type B pancreatic cell fate commitment"/>
    <property type="evidence" value="ECO:0007669"/>
    <property type="project" value="Ensembl"/>
</dbReference>
<dbReference type="GO" id="GO:0060580">
    <property type="term" value="P:ventral spinal cord interneuron fate determination"/>
    <property type="evidence" value="ECO:0007669"/>
    <property type="project" value="Ensembl"/>
</dbReference>
<dbReference type="CDD" id="cd00086">
    <property type="entry name" value="homeodomain"/>
    <property type="match status" value="1"/>
</dbReference>
<dbReference type="FunFam" id="1.10.10.60:FF:000101">
    <property type="entry name" value="NK2 homeobox 8"/>
    <property type="match status" value="1"/>
</dbReference>
<dbReference type="Gene3D" id="1.10.10.60">
    <property type="entry name" value="Homeodomain-like"/>
    <property type="match status" value="1"/>
</dbReference>
<dbReference type="InterPro" id="IPR001356">
    <property type="entry name" value="HD"/>
</dbReference>
<dbReference type="InterPro" id="IPR020479">
    <property type="entry name" value="HD_metazoa"/>
</dbReference>
<dbReference type="InterPro" id="IPR017970">
    <property type="entry name" value="Homeobox_CS"/>
</dbReference>
<dbReference type="InterPro" id="IPR050394">
    <property type="entry name" value="Homeobox_NK-like"/>
</dbReference>
<dbReference type="InterPro" id="IPR009057">
    <property type="entry name" value="Homeodomain-like_sf"/>
</dbReference>
<dbReference type="PANTHER" id="PTHR24340">
    <property type="entry name" value="HOMEOBOX PROTEIN NKX"/>
    <property type="match status" value="1"/>
</dbReference>
<dbReference type="PANTHER" id="PTHR24340:SF24">
    <property type="entry name" value="HOMEOBOX PROTEIN NKX-2.2"/>
    <property type="match status" value="1"/>
</dbReference>
<dbReference type="Pfam" id="PF00046">
    <property type="entry name" value="Homeodomain"/>
    <property type="match status" value="1"/>
</dbReference>
<dbReference type="PRINTS" id="PR00024">
    <property type="entry name" value="HOMEOBOX"/>
</dbReference>
<dbReference type="SMART" id="SM00389">
    <property type="entry name" value="HOX"/>
    <property type="match status" value="1"/>
</dbReference>
<dbReference type="SUPFAM" id="SSF46689">
    <property type="entry name" value="Homeodomain-like"/>
    <property type="match status" value="1"/>
</dbReference>
<dbReference type="PROSITE" id="PS00027">
    <property type="entry name" value="HOMEOBOX_1"/>
    <property type="match status" value="1"/>
</dbReference>
<dbReference type="PROSITE" id="PS50071">
    <property type="entry name" value="HOMEOBOX_2"/>
    <property type="match status" value="1"/>
</dbReference>
<comment type="function">
    <text evidence="2">Transcriptional activator involved in the development of insulin-producting beta cells in the endocrine pancreas (By similarity). May also be involved in specifying diencephalic neuromeric boundaries, and in controlling the expression of genes that play a role in axonal guidance. Binds to elements within the NEUROD1 promoter (By similarity).</text>
</comment>
<comment type="subunit">
    <text evidence="1">Interacts with OLIG2.</text>
</comment>
<comment type="subcellular location">
    <subcellularLocation>
        <location evidence="3">Nucleus</location>
    </subcellularLocation>
</comment>
<comment type="domain">
    <text evidence="1">The homeodomain is essential for interaction with OLIG2.</text>
</comment>
<comment type="similarity">
    <text evidence="5">Belongs to the NK-2 homeobox family.</text>
</comment>
<comment type="online information" name="Atlas of Genetics and Cytogenetics in Oncology and Haematology">
    <link uri="https://atlasgeneticsoncology.org/gene/44177/NKX22"/>
</comment>
<gene>
    <name type="primary">NKX2-2</name>
    <name type="synonym">NKX2.2</name>
    <name type="synonym">NKX2B</name>
</gene>
<organism>
    <name type="scientific">Homo sapiens</name>
    <name type="common">Human</name>
    <dbReference type="NCBI Taxonomy" id="9606"/>
    <lineage>
        <taxon>Eukaryota</taxon>
        <taxon>Metazoa</taxon>
        <taxon>Chordata</taxon>
        <taxon>Craniata</taxon>
        <taxon>Vertebrata</taxon>
        <taxon>Euteleostomi</taxon>
        <taxon>Mammalia</taxon>
        <taxon>Eutheria</taxon>
        <taxon>Euarchontoglires</taxon>
        <taxon>Primates</taxon>
        <taxon>Haplorrhini</taxon>
        <taxon>Catarrhini</taxon>
        <taxon>Hominidae</taxon>
        <taxon>Homo</taxon>
    </lineage>
</organism>
<protein>
    <recommendedName>
        <fullName>Homeobox protein Nkx-2.2</fullName>
    </recommendedName>
    <alternativeName>
        <fullName>Homeobox protein NK-2 homolog B</fullName>
    </alternativeName>
</protein>
<keyword id="KW-0010">Activator</keyword>
<keyword id="KW-0217">Developmental protein</keyword>
<keyword id="KW-0238">DNA-binding</keyword>
<keyword id="KW-0371">Homeobox</keyword>
<keyword id="KW-0539">Nucleus</keyword>
<keyword id="KW-1267">Proteomics identification</keyword>
<keyword id="KW-1185">Reference proteome</keyword>
<keyword id="KW-0804">Transcription</keyword>
<keyword id="KW-0805">Transcription regulation</keyword>
<feature type="chain" id="PRO_0000048929" description="Homeobox protein Nkx-2.2">
    <location>
        <begin position="1"/>
        <end position="273"/>
    </location>
</feature>
<feature type="DNA-binding region" description="Homeobox" evidence="3">
    <location>
        <begin position="128"/>
        <end position="187"/>
    </location>
</feature>
<feature type="region of interest" description="Disordered" evidence="4">
    <location>
        <begin position="1"/>
        <end position="56"/>
    </location>
</feature>
<feature type="region of interest" description="Disordered" evidence="4">
    <location>
        <begin position="90"/>
        <end position="131"/>
    </location>
</feature>
<feature type="compositionally biased region" description="Acidic residues" evidence="4">
    <location>
        <begin position="20"/>
        <end position="38"/>
    </location>
</feature>
<reference key="1">
    <citation type="journal article" date="1998" name="Diabetes">
        <title>Beta-cell transcription factors and diabetes: mutations in the coding region of the BETA2/NeuroD1 (NEUROD1) and Nkx2.2 (NKX2B) genes are not associated with maturity-onset diabetes of the young in Japanese.</title>
        <authorList>
            <person name="Furuta H."/>
            <person name="Horikawa Y."/>
            <person name="Iwasaki N."/>
            <person name="Hara M."/>
            <person name="Sussel L."/>
            <person name="le Beau M.M."/>
            <person name="Davis E.M."/>
            <person name="Ogata M."/>
            <person name="Iwamoto Y."/>
            <person name="German M.S."/>
            <person name="Bell G.I."/>
        </authorList>
    </citation>
    <scope>NUCLEOTIDE SEQUENCE [GENOMIC DNA]</scope>
</reference>
<reference key="2">
    <citation type="journal article" date="2001" name="Nature">
        <title>The DNA sequence and comparative analysis of human chromosome 20.</title>
        <authorList>
            <person name="Deloukas P."/>
            <person name="Matthews L.H."/>
            <person name="Ashurst J.L."/>
            <person name="Burton J."/>
            <person name="Gilbert J.G.R."/>
            <person name="Jones M."/>
            <person name="Stavrides G."/>
            <person name="Almeida J.P."/>
            <person name="Babbage A.K."/>
            <person name="Bagguley C.L."/>
            <person name="Bailey J."/>
            <person name="Barlow K.F."/>
            <person name="Bates K.N."/>
            <person name="Beard L.M."/>
            <person name="Beare D.M."/>
            <person name="Beasley O.P."/>
            <person name="Bird C.P."/>
            <person name="Blakey S.E."/>
            <person name="Bridgeman A.M."/>
            <person name="Brown A.J."/>
            <person name="Buck D."/>
            <person name="Burrill W.D."/>
            <person name="Butler A.P."/>
            <person name="Carder C."/>
            <person name="Carter N.P."/>
            <person name="Chapman J.C."/>
            <person name="Clamp M."/>
            <person name="Clark G."/>
            <person name="Clark L.N."/>
            <person name="Clark S.Y."/>
            <person name="Clee C.M."/>
            <person name="Clegg S."/>
            <person name="Cobley V.E."/>
            <person name="Collier R.E."/>
            <person name="Connor R.E."/>
            <person name="Corby N.R."/>
            <person name="Coulson A."/>
            <person name="Coville G.J."/>
            <person name="Deadman R."/>
            <person name="Dhami P.D."/>
            <person name="Dunn M."/>
            <person name="Ellington A.G."/>
            <person name="Frankland J.A."/>
            <person name="Fraser A."/>
            <person name="French L."/>
            <person name="Garner P."/>
            <person name="Grafham D.V."/>
            <person name="Griffiths C."/>
            <person name="Griffiths M.N.D."/>
            <person name="Gwilliam R."/>
            <person name="Hall R.E."/>
            <person name="Hammond S."/>
            <person name="Harley J.L."/>
            <person name="Heath P.D."/>
            <person name="Ho S."/>
            <person name="Holden J.L."/>
            <person name="Howden P.J."/>
            <person name="Huckle E."/>
            <person name="Hunt A.R."/>
            <person name="Hunt S.E."/>
            <person name="Jekosch K."/>
            <person name="Johnson C.M."/>
            <person name="Johnson D."/>
            <person name="Kay M.P."/>
            <person name="Kimberley A.M."/>
            <person name="King A."/>
            <person name="Knights A."/>
            <person name="Laird G.K."/>
            <person name="Lawlor S."/>
            <person name="Lehvaeslaiho M.H."/>
            <person name="Leversha M.A."/>
            <person name="Lloyd C."/>
            <person name="Lloyd D.M."/>
            <person name="Lovell J.D."/>
            <person name="Marsh V.L."/>
            <person name="Martin S.L."/>
            <person name="McConnachie L.J."/>
            <person name="McLay K."/>
            <person name="McMurray A.A."/>
            <person name="Milne S.A."/>
            <person name="Mistry D."/>
            <person name="Moore M.J.F."/>
            <person name="Mullikin J.C."/>
            <person name="Nickerson T."/>
            <person name="Oliver K."/>
            <person name="Parker A."/>
            <person name="Patel R."/>
            <person name="Pearce T.A.V."/>
            <person name="Peck A.I."/>
            <person name="Phillimore B.J.C.T."/>
            <person name="Prathalingam S.R."/>
            <person name="Plumb R.W."/>
            <person name="Ramsay H."/>
            <person name="Rice C.M."/>
            <person name="Ross M.T."/>
            <person name="Scott C.E."/>
            <person name="Sehra H.K."/>
            <person name="Shownkeen R."/>
            <person name="Sims S."/>
            <person name="Skuce C.D."/>
            <person name="Smith M.L."/>
            <person name="Soderlund C."/>
            <person name="Steward C.A."/>
            <person name="Sulston J.E."/>
            <person name="Swann R.M."/>
            <person name="Sycamore N."/>
            <person name="Taylor R."/>
            <person name="Tee L."/>
            <person name="Thomas D.W."/>
            <person name="Thorpe A."/>
            <person name="Tracey A."/>
            <person name="Tromans A.C."/>
            <person name="Vaudin M."/>
            <person name="Wall M."/>
            <person name="Wallis J.M."/>
            <person name="Whitehead S.L."/>
            <person name="Whittaker P."/>
            <person name="Willey D.L."/>
            <person name="Williams L."/>
            <person name="Williams S.A."/>
            <person name="Wilming L."/>
            <person name="Wray P.W."/>
            <person name="Hubbard T."/>
            <person name="Durbin R.M."/>
            <person name="Bentley D.R."/>
            <person name="Beck S."/>
            <person name="Rogers J."/>
        </authorList>
    </citation>
    <scope>NUCLEOTIDE SEQUENCE [LARGE SCALE GENOMIC DNA]</scope>
</reference>
<reference key="3">
    <citation type="journal article" date="2004" name="Genome Res.">
        <title>The status, quality, and expansion of the NIH full-length cDNA project: the Mammalian Gene Collection (MGC).</title>
        <authorList>
            <consortium name="The MGC Project Team"/>
        </authorList>
    </citation>
    <scope>NUCLEOTIDE SEQUENCE [LARGE SCALE MRNA]</scope>
    <source>
        <tissue>Brain</tissue>
    </source>
</reference>
<sequence length="273" mass="30133">MSLTNTKTGFSVKDILDLPDTNDEEGSVAEGPEEENEGPEPAKRAGPLGQGALDAVQSLPLKNPFYDSSDNPYTRWLASTEGLQYSLHGLAAGAPPQDSSSKSPEPSADESPDNDKETPGGGGDAGKKRKRRVLFSKAQTYELERRFRQQRYLSAPEREHLASLIRLTPTQVKIWFQNHRYKMKRARAEKGMEVTPLPSPRRVAVPVLVRDGKPCHALKAQDLAAATFQAGIPFSAYSAQSLQHMQYNAQYSSASTPQYPTAHPLVQAQQWTW</sequence>